<feature type="chain" id="PRO_0000445874" description="Very-long-chain aldehyde decarbonylase GL1-4">
    <location>
        <begin position="1"/>
        <end position="619"/>
    </location>
</feature>
<feature type="transmembrane region" description="Helical" evidence="2">
    <location>
        <begin position="45"/>
        <end position="65"/>
    </location>
</feature>
<feature type="transmembrane region" description="Helical" evidence="2">
    <location>
        <begin position="94"/>
        <end position="114"/>
    </location>
</feature>
<feature type="transmembrane region" description="Helical" evidence="2">
    <location>
        <begin position="126"/>
        <end position="146"/>
    </location>
</feature>
<feature type="transmembrane region" description="Helical" evidence="2">
    <location>
        <begin position="178"/>
        <end position="198"/>
    </location>
</feature>
<feature type="transmembrane region" description="Helical" evidence="2">
    <location>
        <begin position="325"/>
        <end position="345"/>
    </location>
</feature>
<feature type="domain" description="Fatty acid hydroxylase" evidence="2">
    <location>
        <begin position="138"/>
        <end position="272"/>
    </location>
</feature>
<accession>B8AFI3</accession>
<evidence type="ECO:0000250" key="1">
    <source>
        <dbReference type="UniProtKB" id="F4HVY0"/>
    </source>
</evidence>
<evidence type="ECO:0000255" key="2"/>
<evidence type="ECO:0000305" key="3"/>
<evidence type="ECO:0000312" key="4">
    <source>
        <dbReference type="EMBL" id="EEC73617.1"/>
    </source>
</evidence>
<proteinExistence type="inferred from homology"/>
<name>GLO14_ORYSI</name>
<sequence length="619" mass="71509">MATRPGPLTEWPWHRLGNFKYVVMAPVVAHGARRVMRNGWGDLDIAFSLILPSLLLRMIHNQIWISLSRYQTARSKHRIVDRGIEFDQVDRERGWDDQILFNGLVFYAGYLAMPSVRRMPVWRTDGAVVTALVHTGPVEFLYYWFHRALHHHFLYSRYHSHHHASIVTEPITSVIHPFAEHVVYFILFAIPILSTIYLGNVSAMGIVGYIAYIDFMNNMGHCNFELVPEWIFQIFPPLKYLIYTPSFHSLHHTQFRTNYSLFMPFYDYIYNTMDKSSDELYESSLKGTEETPDLVHLTHMTNLQSAYHLRIGIASIASKPYSDSAWYMWTLWPLAWLSMVLAWIYGSSAFVVERIKLNKMKMQTWAIPRYNFQYGLTWEREPINDLIEKAILDADMKGVKVISLGLLNQAKQLNGNGELFRQKYPKLGVRIVDGSGLATAVVLKSIPSDAKKVFLRTGTSKIARAIAIALCDRGVQVIMNEKEVYHMLKSQIPENRASYLKLSSDNVPQLWIVHNIDDNEQKMAPKGTIFIPISQFPLKKLRKDCTYMSTPAMRIPEEMKNIHSCENWLPRRVMSAWHIAGILHALEGWNMHECGDEMMDIEKSWSAAIRHGFLPLTKA</sequence>
<comment type="function">
    <text evidence="1">Aldehyde decarbonylase involved in the conversion of aldehydes to alkanes. Core component of a very-long-chain alkane synthesis complex.</text>
</comment>
<comment type="catalytic activity">
    <reaction evidence="1">
        <text>a long-chain fatty aldehyde + 2 NADPH + O2 + H(+) = a long-chain alkane + formate + 2 NADP(+) + H2O</text>
        <dbReference type="Rhea" id="RHEA:21440"/>
        <dbReference type="ChEBI" id="CHEBI:15377"/>
        <dbReference type="ChEBI" id="CHEBI:15378"/>
        <dbReference type="ChEBI" id="CHEBI:15379"/>
        <dbReference type="ChEBI" id="CHEBI:15740"/>
        <dbReference type="ChEBI" id="CHEBI:17176"/>
        <dbReference type="ChEBI" id="CHEBI:57783"/>
        <dbReference type="ChEBI" id="CHEBI:58349"/>
        <dbReference type="ChEBI" id="CHEBI:83563"/>
        <dbReference type="EC" id="4.1.99.5"/>
    </reaction>
</comment>
<comment type="subunit">
    <text evidence="1">Homodimer.</text>
</comment>
<comment type="subcellular location">
    <subcellularLocation>
        <location evidence="1">Endoplasmic reticulum membrane</location>
        <topology evidence="1">Multi-pass membrane protein</topology>
    </subcellularLocation>
</comment>
<comment type="similarity">
    <text evidence="3">Belongs to the sterol desaturase family.</text>
</comment>
<protein>
    <recommendedName>
        <fullName evidence="3">Very-long-chain aldehyde decarbonylase GL1-4</fullName>
        <ecNumber evidence="1">4.1.99.5</ecNumber>
    </recommendedName>
    <alternativeName>
        <fullName evidence="3">Protein GLOSSY 1-4</fullName>
    </alternativeName>
</protein>
<reference key="1">
    <citation type="journal article" date="2005" name="PLoS Biol.">
        <title>The genomes of Oryza sativa: a history of duplications.</title>
        <authorList>
            <person name="Yu J."/>
            <person name="Wang J."/>
            <person name="Lin W."/>
            <person name="Li S."/>
            <person name="Li H."/>
            <person name="Zhou J."/>
            <person name="Ni P."/>
            <person name="Dong W."/>
            <person name="Hu S."/>
            <person name="Zeng C."/>
            <person name="Zhang J."/>
            <person name="Zhang Y."/>
            <person name="Li R."/>
            <person name="Xu Z."/>
            <person name="Li S."/>
            <person name="Li X."/>
            <person name="Zheng H."/>
            <person name="Cong L."/>
            <person name="Lin L."/>
            <person name="Yin J."/>
            <person name="Geng J."/>
            <person name="Li G."/>
            <person name="Shi J."/>
            <person name="Liu J."/>
            <person name="Lv H."/>
            <person name="Li J."/>
            <person name="Wang J."/>
            <person name="Deng Y."/>
            <person name="Ran L."/>
            <person name="Shi X."/>
            <person name="Wang X."/>
            <person name="Wu Q."/>
            <person name="Li C."/>
            <person name="Ren X."/>
            <person name="Wang J."/>
            <person name="Wang X."/>
            <person name="Li D."/>
            <person name="Liu D."/>
            <person name="Zhang X."/>
            <person name="Ji Z."/>
            <person name="Zhao W."/>
            <person name="Sun Y."/>
            <person name="Zhang Z."/>
            <person name="Bao J."/>
            <person name="Han Y."/>
            <person name="Dong L."/>
            <person name="Ji J."/>
            <person name="Chen P."/>
            <person name="Wu S."/>
            <person name="Liu J."/>
            <person name="Xiao Y."/>
            <person name="Bu D."/>
            <person name="Tan J."/>
            <person name="Yang L."/>
            <person name="Ye C."/>
            <person name="Zhang J."/>
            <person name="Xu J."/>
            <person name="Zhou Y."/>
            <person name="Yu Y."/>
            <person name="Zhang B."/>
            <person name="Zhuang S."/>
            <person name="Wei H."/>
            <person name="Liu B."/>
            <person name="Lei M."/>
            <person name="Yu H."/>
            <person name="Li Y."/>
            <person name="Xu H."/>
            <person name="Wei S."/>
            <person name="He X."/>
            <person name="Fang L."/>
            <person name="Zhang Z."/>
            <person name="Zhang Y."/>
            <person name="Huang X."/>
            <person name="Su Z."/>
            <person name="Tong W."/>
            <person name="Li J."/>
            <person name="Tong Z."/>
            <person name="Li S."/>
            <person name="Ye J."/>
            <person name="Wang L."/>
            <person name="Fang L."/>
            <person name="Lei T."/>
            <person name="Chen C.-S."/>
            <person name="Chen H.-C."/>
            <person name="Xu Z."/>
            <person name="Li H."/>
            <person name="Huang H."/>
            <person name="Zhang F."/>
            <person name="Xu H."/>
            <person name="Li N."/>
            <person name="Zhao C."/>
            <person name="Li S."/>
            <person name="Dong L."/>
            <person name="Huang Y."/>
            <person name="Li L."/>
            <person name="Xi Y."/>
            <person name="Qi Q."/>
            <person name="Li W."/>
            <person name="Zhang B."/>
            <person name="Hu W."/>
            <person name="Zhang Y."/>
            <person name="Tian X."/>
            <person name="Jiao Y."/>
            <person name="Liang X."/>
            <person name="Jin J."/>
            <person name="Gao L."/>
            <person name="Zheng W."/>
            <person name="Hao B."/>
            <person name="Liu S.-M."/>
            <person name="Wang W."/>
            <person name="Yuan L."/>
            <person name="Cao M."/>
            <person name="McDermott J."/>
            <person name="Samudrala R."/>
            <person name="Wang J."/>
            <person name="Wong G.K.-S."/>
            <person name="Yang H."/>
        </authorList>
    </citation>
    <scope>NUCLEOTIDE SEQUENCE [LARGE SCALE GENOMIC DNA]</scope>
    <source>
        <strain>cv. 93-11</strain>
    </source>
</reference>
<gene>
    <name evidence="3" type="primary">GL1-4</name>
    <name evidence="4" type="ORF">OsI_08114</name>
</gene>
<dbReference type="EC" id="4.1.99.5" evidence="1"/>
<dbReference type="EMBL" id="CM000127">
    <property type="protein sequence ID" value="EEC73617.1"/>
    <property type="molecule type" value="Genomic_DNA"/>
</dbReference>
<dbReference type="STRING" id="39946.B8AFI3"/>
<dbReference type="EnsemblPlants" id="BGIOSGA006020-TA">
    <property type="protein sequence ID" value="BGIOSGA006020-PA"/>
    <property type="gene ID" value="BGIOSGA006020"/>
</dbReference>
<dbReference type="Gramene" id="BGIOSGA006020-TA">
    <property type="protein sequence ID" value="BGIOSGA006020-PA"/>
    <property type="gene ID" value="BGIOSGA006020"/>
</dbReference>
<dbReference type="HOGENOM" id="CLU_017842_1_0_1"/>
<dbReference type="OMA" id="KMAPEGA"/>
<dbReference type="Proteomes" id="UP000007015">
    <property type="component" value="Chromosome 2"/>
</dbReference>
<dbReference type="GO" id="GO:0005789">
    <property type="term" value="C:endoplasmic reticulum membrane"/>
    <property type="evidence" value="ECO:0007669"/>
    <property type="project" value="UniProtKB-SubCell"/>
</dbReference>
<dbReference type="GO" id="GO:0071771">
    <property type="term" value="F:aldehyde oxygenase (deformylating) activity"/>
    <property type="evidence" value="ECO:0007669"/>
    <property type="project" value="UniProtKB-EC"/>
</dbReference>
<dbReference type="GO" id="GO:0005506">
    <property type="term" value="F:iron ion binding"/>
    <property type="evidence" value="ECO:0007669"/>
    <property type="project" value="InterPro"/>
</dbReference>
<dbReference type="GO" id="GO:0016491">
    <property type="term" value="F:oxidoreductase activity"/>
    <property type="evidence" value="ECO:0007669"/>
    <property type="project" value="InterPro"/>
</dbReference>
<dbReference type="GO" id="GO:0008610">
    <property type="term" value="P:lipid biosynthetic process"/>
    <property type="evidence" value="ECO:0007669"/>
    <property type="project" value="InterPro"/>
</dbReference>
<dbReference type="GO" id="GO:0009737">
    <property type="term" value="P:response to abscisic acid"/>
    <property type="evidence" value="ECO:0007669"/>
    <property type="project" value="EnsemblPlants"/>
</dbReference>
<dbReference type="GO" id="GO:0009409">
    <property type="term" value="P:response to cold"/>
    <property type="evidence" value="ECO:0007669"/>
    <property type="project" value="EnsemblPlants"/>
</dbReference>
<dbReference type="InterPro" id="IPR021940">
    <property type="entry name" value="CER1-like_C"/>
</dbReference>
<dbReference type="InterPro" id="IPR006694">
    <property type="entry name" value="Fatty_acid_hydroxylase"/>
</dbReference>
<dbReference type="InterPro" id="IPR050307">
    <property type="entry name" value="Sterol_Desaturase_Related"/>
</dbReference>
<dbReference type="PANTHER" id="PTHR11863">
    <property type="entry name" value="STEROL DESATURASE"/>
    <property type="match status" value="1"/>
</dbReference>
<dbReference type="Pfam" id="PF12076">
    <property type="entry name" value="CER1-like_C"/>
    <property type="match status" value="1"/>
</dbReference>
<dbReference type="Pfam" id="PF04116">
    <property type="entry name" value="FA_hydroxylase"/>
    <property type="match status" value="1"/>
</dbReference>
<organism>
    <name type="scientific">Oryza sativa subsp. indica</name>
    <name type="common">Rice</name>
    <dbReference type="NCBI Taxonomy" id="39946"/>
    <lineage>
        <taxon>Eukaryota</taxon>
        <taxon>Viridiplantae</taxon>
        <taxon>Streptophyta</taxon>
        <taxon>Embryophyta</taxon>
        <taxon>Tracheophyta</taxon>
        <taxon>Spermatophyta</taxon>
        <taxon>Magnoliopsida</taxon>
        <taxon>Liliopsida</taxon>
        <taxon>Poales</taxon>
        <taxon>Poaceae</taxon>
        <taxon>BOP clade</taxon>
        <taxon>Oryzoideae</taxon>
        <taxon>Oryzeae</taxon>
        <taxon>Oryzinae</taxon>
        <taxon>Oryza</taxon>
        <taxon>Oryza sativa</taxon>
    </lineage>
</organism>
<keyword id="KW-0256">Endoplasmic reticulum</keyword>
<keyword id="KW-0456">Lyase</keyword>
<keyword id="KW-0472">Membrane</keyword>
<keyword id="KW-0521">NADP</keyword>
<keyword id="KW-1185">Reference proteome</keyword>
<keyword id="KW-0812">Transmembrane</keyword>
<keyword id="KW-1133">Transmembrane helix</keyword>